<organism>
    <name type="scientific">Arabidopsis thaliana</name>
    <name type="common">Mouse-ear cress</name>
    <dbReference type="NCBI Taxonomy" id="3702"/>
    <lineage>
        <taxon>Eukaryota</taxon>
        <taxon>Viridiplantae</taxon>
        <taxon>Streptophyta</taxon>
        <taxon>Embryophyta</taxon>
        <taxon>Tracheophyta</taxon>
        <taxon>Spermatophyta</taxon>
        <taxon>Magnoliopsida</taxon>
        <taxon>eudicotyledons</taxon>
        <taxon>Gunneridae</taxon>
        <taxon>Pentapetalae</taxon>
        <taxon>rosids</taxon>
        <taxon>malvids</taxon>
        <taxon>Brassicales</taxon>
        <taxon>Brassicaceae</taxon>
        <taxon>Camelineae</taxon>
        <taxon>Arabidopsis</taxon>
    </lineage>
</organism>
<feature type="chain" id="PRO_0000227930" description="ABC transporter B family member 17">
    <location>
        <begin position="1"/>
        <end position="1240"/>
    </location>
</feature>
<feature type="transmembrane region" description="Helical" evidence="3">
    <location>
        <begin position="36"/>
        <end position="56"/>
    </location>
</feature>
<feature type="transmembrane region" description="Helical" evidence="3">
    <location>
        <begin position="81"/>
        <end position="101"/>
    </location>
</feature>
<feature type="transmembrane region" description="Helical" evidence="3">
    <location>
        <begin position="158"/>
        <end position="180"/>
    </location>
</feature>
<feature type="transmembrane region" description="Helical" evidence="3">
    <location>
        <begin position="184"/>
        <end position="206"/>
    </location>
</feature>
<feature type="transmembrane region" description="Helical" evidence="3">
    <location>
        <begin position="264"/>
        <end position="284"/>
    </location>
</feature>
<feature type="transmembrane region" description="Helical" evidence="3">
    <location>
        <begin position="296"/>
        <end position="316"/>
    </location>
</feature>
<feature type="transmembrane region" description="Helical" evidence="3">
    <location>
        <begin position="681"/>
        <end position="701"/>
    </location>
</feature>
<feature type="transmembrane region" description="Helical" evidence="3">
    <location>
        <begin position="714"/>
        <end position="734"/>
    </location>
</feature>
<feature type="transmembrane region" description="Helical" evidence="3">
    <location>
        <begin position="793"/>
        <end position="815"/>
    </location>
</feature>
<feature type="transmembrane region" description="Helical" evidence="3">
    <location>
        <begin position="817"/>
        <end position="839"/>
    </location>
</feature>
<feature type="transmembrane region" description="Helical" evidence="3">
    <location>
        <begin position="896"/>
        <end position="919"/>
    </location>
</feature>
<feature type="transmembrane region" description="Helical" evidence="3">
    <location>
        <begin position="923"/>
        <end position="943"/>
    </location>
</feature>
<feature type="domain" description="ABC transmembrane type-1 1" evidence="3">
    <location>
        <begin position="35"/>
        <end position="324"/>
    </location>
</feature>
<feature type="domain" description="ABC transporter 1" evidence="2">
    <location>
        <begin position="359"/>
        <end position="595"/>
    </location>
</feature>
<feature type="domain" description="ABC transmembrane type-1 2" evidence="3">
    <location>
        <begin position="672"/>
        <end position="960"/>
    </location>
</feature>
<feature type="domain" description="ABC transporter 2" evidence="2">
    <location>
        <begin position="995"/>
        <end position="1233"/>
    </location>
</feature>
<feature type="binding site" evidence="2">
    <location>
        <begin position="394"/>
        <end position="401"/>
    </location>
    <ligand>
        <name>ATP</name>
        <dbReference type="ChEBI" id="CHEBI:30616"/>
        <label>1</label>
    </ligand>
</feature>
<feature type="binding site" evidence="2">
    <location>
        <begin position="1030"/>
        <end position="1037"/>
    </location>
    <ligand>
        <name>ATP</name>
        <dbReference type="ChEBI" id="CHEBI:30616"/>
        <label>2</label>
    </ligand>
</feature>
<feature type="glycosylation site" description="N-linked (GlcNAc...) asparagine" evidence="1">
    <location>
        <position position="70"/>
    </location>
</feature>
<feature type="glycosylation site" description="N-linked (GlcNAc...) asparagine" evidence="1">
    <location>
        <position position="542"/>
    </location>
</feature>
<feature type="glycosylation site" description="N-linked (GlcNAc...) asparagine" evidence="1">
    <location>
        <position position="609"/>
    </location>
</feature>
<feature type="glycosylation site" description="N-linked (GlcNAc...) asparagine" evidence="1">
    <location>
        <position position="642"/>
    </location>
</feature>
<feature type="glycosylation site" description="N-linked (GlcNAc...) asparagine" evidence="1">
    <location>
        <position position="769"/>
    </location>
</feature>
<feature type="glycosylation site" description="N-linked (GlcNAc...) asparagine" evidence="1">
    <location>
        <position position="1015"/>
    </location>
</feature>
<gene>
    <name type="primary">ABCB17</name>
    <name type="synonym">MDR19</name>
    <name type="synonym">PGP17</name>
    <name type="ordered locus">At3g28380</name>
    <name type="ORF">MFJ20.6</name>
</gene>
<dbReference type="EMBL" id="AB026644">
    <property type="protein sequence ID" value="BAB02854.1"/>
    <property type="molecule type" value="Genomic_DNA"/>
</dbReference>
<dbReference type="EMBL" id="CP002686">
    <property type="protein sequence ID" value="AEE77439.1"/>
    <property type="molecule type" value="Genomic_DNA"/>
</dbReference>
<dbReference type="RefSeq" id="NP_189479.1">
    <property type="nucleotide sequence ID" value="NM_113758.2"/>
</dbReference>
<dbReference type="SMR" id="Q9LSJ6"/>
<dbReference type="BioGRID" id="7796">
    <property type="interactions" value="1"/>
</dbReference>
<dbReference type="FunCoup" id="Q9LSJ6">
    <property type="interactions" value="164"/>
</dbReference>
<dbReference type="STRING" id="3702.Q9LSJ6"/>
<dbReference type="GlyCosmos" id="Q9LSJ6">
    <property type="glycosylation" value="6 sites, No reported glycans"/>
</dbReference>
<dbReference type="GlyGen" id="Q9LSJ6">
    <property type="glycosylation" value="6 sites"/>
</dbReference>
<dbReference type="PaxDb" id="3702-AT3G28380.1"/>
<dbReference type="EnsemblPlants" id="AT3G28380.1">
    <property type="protein sequence ID" value="AT3G28380.1"/>
    <property type="gene ID" value="AT3G28380"/>
</dbReference>
<dbReference type="GeneID" id="822467"/>
<dbReference type="Gramene" id="AT3G28380.1">
    <property type="protein sequence ID" value="AT3G28380.1"/>
    <property type="gene ID" value="AT3G28380"/>
</dbReference>
<dbReference type="KEGG" id="ath:AT3G28380"/>
<dbReference type="Araport" id="AT3G28380"/>
<dbReference type="TAIR" id="AT3G28380">
    <property type="gene designation" value="ABCB17"/>
</dbReference>
<dbReference type="eggNOG" id="KOG0055">
    <property type="taxonomic scope" value="Eukaryota"/>
</dbReference>
<dbReference type="HOGENOM" id="CLU_000604_17_2_1"/>
<dbReference type="InParanoid" id="Q9LSJ6"/>
<dbReference type="OMA" id="NIEAGSH"/>
<dbReference type="PhylomeDB" id="Q9LSJ6"/>
<dbReference type="BioCyc" id="ARA:AT3G28380-MONOMER"/>
<dbReference type="PRO" id="PR:Q9LSJ6"/>
<dbReference type="Proteomes" id="UP000006548">
    <property type="component" value="Chromosome 3"/>
</dbReference>
<dbReference type="ExpressionAtlas" id="Q9LSJ6">
    <property type="expression patterns" value="baseline and differential"/>
</dbReference>
<dbReference type="GO" id="GO:0016020">
    <property type="term" value="C:membrane"/>
    <property type="evidence" value="ECO:0007669"/>
    <property type="project" value="UniProtKB-SubCell"/>
</dbReference>
<dbReference type="GO" id="GO:0009506">
    <property type="term" value="C:plasmodesma"/>
    <property type="evidence" value="ECO:0007005"/>
    <property type="project" value="TAIR"/>
</dbReference>
<dbReference type="GO" id="GO:0140359">
    <property type="term" value="F:ABC-type transporter activity"/>
    <property type="evidence" value="ECO:0007669"/>
    <property type="project" value="InterPro"/>
</dbReference>
<dbReference type="GO" id="GO:0005524">
    <property type="term" value="F:ATP binding"/>
    <property type="evidence" value="ECO:0007669"/>
    <property type="project" value="UniProtKB-KW"/>
</dbReference>
<dbReference type="GO" id="GO:0016887">
    <property type="term" value="F:ATP hydrolysis activity"/>
    <property type="evidence" value="ECO:0007669"/>
    <property type="project" value="InterPro"/>
</dbReference>
<dbReference type="CDD" id="cd18577">
    <property type="entry name" value="ABC_6TM_Pgp_ABCB1_D1_like"/>
    <property type="match status" value="1"/>
</dbReference>
<dbReference type="CDD" id="cd18578">
    <property type="entry name" value="ABC_6TM_Pgp_ABCB1_D2_like"/>
    <property type="match status" value="1"/>
</dbReference>
<dbReference type="CDD" id="cd03249">
    <property type="entry name" value="ABC_MTABC3_MDL1_MDL2"/>
    <property type="match status" value="2"/>
</dbReference>
<dbReference type="FunFam" id="1.20.1560.10:FF:000029">
    <property type="entry name" value="ABC transporter B family member 1"/>
    <property type="match status" value="1"/>
</dbReference>
<dbReference type="FunFam" id="3.40.50.300:FF:000205">
    <property type="entry name" value="ABC transporter B family member 4"/>
    <property type="match status" value="2"/>
</dbReference>
<dbReference type="FunFam" id="1.20.1560.10:FF:000126">
    <property type="entry name" value="Putative ABC transporter B family member 8"/>
    <property type="match status" value="1"/>
</dbReference>
<dbReference type="Gene3D" id="1.20.1560.10">
    <property type="entry name" value="ABC transporter type 1, transmembrane domain"/>
    <property type="match status" value="1"/>
</dbReference>
<dbReference type="Gene3D" id="3.40.50.300">
    <property type="entry name" value="P-loop containing nucleotide triphosphate hydrolases"/>
    <property type="match status" value="2"/>
</dbReference>
<dbReference type="InterPro" id="IPR003593">
    <property type="entry name" value="AAA+_ATPase"/>
</dbReference>
<dbReference type="InterPro" id="IPR011527">
    <property type="entry name" value="ABC1_TM_dom"/>
</dbReference>
<dbReference type="InterPro" id="IPR036640">
    <property type="entry name" value="ABC1_TM_sf"/>
</dbReference>
<dbReference type="InterPro" id="IPR003439">
    <property type="entry name" value="ABC_transporter-like_ATP-bd"/>
</dbReference>
<dbReference type="InterPro" id="IPR017871">
    <property type="entry name" value="ABC_transporter-like_CS"/>
</dbReference>
<dbReference type="InterPro" id="IPR027417">
    <property type="entry name" value="P-loop_NTPase"/>
</dbReference>
<dbReference type="PANTHER" id="PTHR45136">
    <property type="entry name" value="ABC TRANSPORTER DOMAIN-CONTAINING PROTEIN"/>
    <property type="match status" value="1"/>
</dbReference>
<dbReference type="PANTHER" id="PTHR45136:SF2">
    <property type="entry name" value="ABC TRANSPORTER DOMAIN-CONTAINING PROTEIN"/>
    <property type="match status" value="1"/>
</dbReference>
<dbReference type="Pfam" id="PF00664">
    <property type="entry name" value="ABC_membrane"/>
    <property type="match status" value="2"/>
</dbReference>
<dbReference type="Pfam" id="PF00005">
    <property type="entry name" value="ABC_tran"/>
    <property type="match status" value="2"/>
</dbReference>
<dbReference type="SMART" id="SM00382">
    <property type="entry name" value="AAA"/>
    <property type="match status" value="2"/>
</dbReference>
<dbReference type="SUPFAM" id="SSF90123">
    <property type="entry name" value="ABC transporter transmembrane region"/>
    <property type="match status" value="2"/>
</dbReference>
<dbReference type="SUPFAM" id="SSF52540">
    <property type="entry name" value="P-loop containing nucleoside triphosphate hydrolases"/>
    <property type="match status" value="2"/>
</dbReference>
<dbReference type="PROSITE" id="PS50929">
    <property type="entry name" value="ABC_TM1F"/>
    <property type="match status" value="2"/>
</dbReference>
<dbReference type="PROSITE" id="PS00211">
    <property type="entry name" value="ABC_TRANSPORTER_1"/>
    <property type="match status" value="2"/>
</dbReference>
<dbReference type="PROSITE" id="PS50893">
    <property type="entry name" value="ABC_TRANSPORTER_2"/>
    <property type="match status" value="2"/>
</dbReference>
<sequence length="1240" mass="136062">MGKEDEKESGRDKMKSFGSIRSIFMHADGVDWILMALGLIGAVGDGFITPVVVFIFNTLLNNLGTSSSNNKTFMQTISKNVVALLYVACGSWVICFLEGYCWTRTGERQAARMREKYLRAVLRQDVGYFDLHVTSTSDVITSISSDSLVIQDFLSEKLPNFLMNASAFVASYIVSFILMWRLTIVGFPFIILLLVPGLMYGRALVSISRKIHEQYNEAGSIAEQAISSVRTVYAFGSENKMIGKFSTALRGSVKLGLRQGLAKGITIGSNGVTHAIWAFLTWYGSRLVMNHGSKGGTVFVVISCITYGGVSLGQSLSNLKYFSEAFVAWERILEVIKRVPDIDSNKKEGQILERMKGEVEFNHVKFTYLSRPETTIFDDLCLKIPAGKTVALVGGSGSGKSTVISLLQRFYDPIAGEILIDGVSIDKLQVNWLRSQMGLVSQEPVLFATSITENILFGKEDASLDEVVEAAKASNAHTFISQFPLGYKTQVGERGVQMSGGQKQRIAIARAIIKSPKILLLDEATSALDSESERVVQESLDNASIGRTTIVIAHRLSTIRNADVICVIHNGQIVETGSHEELLKRIDGQYTSLVSLQQMENEESNVNINVSVTKDQVMSLSKDFKYSQHNSIGSTSSSIVTNVSDLIPNDNQPLVPSFTRLMVMNRPEWKHALYGCLSAALVGVLQPVSAYSAGSVISVFFLTSHDQIKEKTRIYVLLFVGLAIFSFLVNISQHYGFAYMGEYLTKRIREQMLSKILTFEVNWFDIDDNSSGAICSRLAKDANVVRSMVGDRMSLLVQTISAVIIACIIGLVIAWRLAIVMISVQPLIVVCFYTQRVLLKSLSEKASKAQDESSKLAAEAVSNIRTITAFSSQERIIKLLKKVQEGPRRESVHRSWLAGIVLGTSRSLITCTSALNFWYGGRLIADGKIVSKAFFEIFLIFVTTGRVIADAGTMTTDLARGLDAVGSVFAVLDRCTTIEPKNPDGYVAEKIKGQITFLNVDFAYPTRPDVVIFENFSIEIDEGKSTAIVGTSGSGKSTIIGLIERFYDPLKGTVKIDGRDIRSYHLRSLRKYISLVSQEPMLFAGTIRENIMYGGTSDKIDESEIIEAAKAANAHDFITSLSNGYDTNCGDKGVQLSGGQKQRIAIARAVLKNPSVLLLDEATSALDSKSERVVQDALERVMVGRTSIMIAHRLSTIQNCDMIVVLGKGKIVESGTHSSLLEKGPTGTYFSLAGIQRTLC</sequence>
<proteinExistence type="inferred from homology"/>
<protein>
    <recommendedName>
        <fullName>ABC transporter B family member 17</fullName>
        <shortName>ABC transporter ABCB.17</shortName>
        <shortName>AtABCB17</shortName>
    </recommendedName>
    <alternativeName>
        <fullName>P-glycoprotein 17</fullName>
    </alternativeName>
    <alternativeName>
        <fullName>Putative multidrug resistance protein 19</fullName>
    </alternativeName>
</protein>
<reference key="1">
    <citation type="journal article" date="2000" name="DNA Res.">
        <title>Structural analysis of Arabidopsis thaliana chromosome 3. I. Sequence features of the regions of 4,504,864 bp covered by sixty P1 and TAC clones.</title>
        <authorList>
            <person name="Sato S."/>
            <person name="Nakamura Y."/>
            <person name="Kaneko T."/>
            <person name="Katoh T."/>
            <person name="Asamizu E."/>
            <person name="Tabata S."/>
        </authorList>
    </citation>
    <scope>NUCLEOTIDE SEQUENCE [LARGE SCALE GENOMIC DNA]</scope>
    <source>
        <strain>cv. Columbia</strain>
    </source>
</reference>
<reference key="2">
    <citation type="journal article" date="2017" name="Plant J.">
        <title>Araport11: a complete reannotation of the Arabidopsis thaliana reference genome.</title>
        <authorList>
            <person name="Cheng C.Y."/>
            <person name="Krishnakumar V."/>
            <person name="Chan A.P."/>
            <person name="Thibaud-Nissen F."/>
            <person name="Schobel S."/>
            <person name="Town C.D."/>
        </authorList>
    </citation>
    <scope>GENOME REANNOTATION</scope>
    <source>
        <strain>cv. Columbia</strain>
    </source>
</reference>
<reference key="3">
    <citation type="journal article" date="2001" name="J. Biol. Chem.">
        <title>The Arabidopsis thaliana ABC protein superfamily, a complete inventory.</title>
        <authorList>
            <person name="Sanchez-Fernandez R."/>
            <person name="Davies T.G."/>
            <person name="Coleman J.O."/>
            <person name="Rea P.A."/>
        </authorList>
    </citation>
    <scope>GENE FAMILY</scope>
    <scope>NOMENCLATURE</scope>
</reference>
<reference key="4">
    <citation type="journal article" date="2008" name="Trends Plant Sci.">
        <title>Plant ABC proteins - a unified nomenclature and updated inventory.</title>
        <authorList>
            <person name="Verrier P.J."/>
            <person name="Bird D."/>
            <person name="Burla B."/>
            <person name="Dassa E."/>
            <person name="Forestier C."/>
            <person name="Geisler M."/>
            <person name="Klein M."/>
            <person name="Kolukisaoglu H.U."/>
            <person name="Lee Y."/>
            <person name="Martinoia E."/>
            <person name="Murphy A."/>
            <person name="Rea P.A."/>
            <person name="Samuels L."/>
            <person name="Schulz B."/>
            <person name="Spalding E.J."/>
            <person name="Yazaki K."/>
            <person name="Theodoulou F.L."/>
        </authorList>
    </citation>
    <scope>GENE FAMILY</scope>
    <scope>NOMENCLATURE</scope>
</reference>
<comment type="subcellular location">
    <subcellularLocation>
        <location evidence="3">Membrane</location>
        <topology evidence="3">Multi-pass membrane protein</topology>
    </subcellularLocation>
</comment>
<comment type="similarity">
    <text evidence="4">Belongs to the ABC transporter superfamily. ABCB family. Multidrug resistance exporter (TC 3.A.1.201) subfamily.</text>
</comment>
<evidence type="ECO:0000255" key="1"/>
<evidence type="ECO:0000255" key="2">
    <source>
        <dbReference type="PROSITE-ProRule" id="PRU00434"/>
    </source>
</evidence>
<evidence type="ECO:0000255" key="3">
    <source>
        <dbReference type="PROSITE-ProRule" id="PRU00441"/>
    </source>
</evidence>
<evidence type="ECO:0000305" key="4"/>
<accession>Q9LSJ6</accession>
<name>AB17B_ARATH</name>
<keyword id="KW-0067">ATP-binding</keyword>
<keyword id="KW-0325">Glycoprotein</keyword>
<keyword id="KW-0472">Membrane</keyword>
<keyword id="KW-0547">Nucleotide-binding</keyword>
<keyword id="KW-1185">Reference proteome</keyword>
<keyword id="KW-0677">Repeat</keyword>
<keyword id="KW-0812">Transmembrane</keyword>
<keyword id="KW-1133">Transmembrane helix</keyword>
<keyword id="KW-0813">Transport</keyword>